<keyword id="KW-0066">ATP synthesis</keyword>
<keyword id="KW-0997">Cell inner membrane</keyword>
<keyword id="KW-1003">Cell membrane</keyword>
<keyword id="KW-0139">CF(1)</keyword>
<keyword id="KW-0375">Hydrogen ion transport</keyword>
<keyword id="KW-0406">Ion transport</keyword>
<keyword id="KW-0472">Membrane</keyword>
<keyword id="KW-0813">Transport</keyword>
<reference key="1">
    <citation type="journal article" date="2006" name="PLoS Genet.">
        <title>Who ate whom? Adaptive Helicobacter genomic changes that accompanied a host jump from early humans to large felines.</title>
        <authorList>
            <person name="Eppinger M."/>
            <person name="Baar C."/>
            <person name="Linz B."/>
            <person name="Raddatz G."/>
            <person name="Lanz C."/>
            <person name="Keller H."/>
            <person name="Morelli G."/>
            <person name="Gressmann H."/>
            <person name="Achtman M."/>
            <person name="Schuster S.C."/>
        </authorList>
    </citation>
    <scope>NUCLEOTIDE SEQUENCE [LARGE SCALE GENOMIC DNA]</scope>
    <source>
        <strain>Sheeba</strain>
    </source>
</reference>
<feature type="chain" id="PRO_1000056489" description="ATP synthase epsilon chain">
    <location>
        <begin position="1"/>
        <end position="123"/>
    </location>
</feature>
<name>ATPE_HELAH</name>
<gene>
    <name evidence="1" type="primary">atpC</name>
    <name type="ordered locus">Hac_0583</name>
</gene>
<sequence length="123" mass="13283">MALLKISVVVPEGEVYTGEVRSVVLPGVEGEFGVLYGHSNMITLLQAGVIEIETESQKEHIAISWGYAEVTGEHVDILADGAVFIKKESDDRDDAISRAKRLLEDASSDRLAVSSVLAKIESL</sequence>
<organism>
    <name type="scientific">Helicobacter acinonychis (strain Sheeba)</name>
    <dbReference type="NCBI Taxonomy" id="382638"/>
    <lineage>
        <taxon>Bacteria</taxon>
        <taxon>Pseudomonadati</taxon>
        <taxon>Campylobacterota</taxon>
        <taxon>Epsilonproteobacteria</taxon>
        <taxon>Campylobacterales</taxon>
        <taxon>Helicobacteraceae</taxon>
        <taxon>Helicobacter</taxon>
    </lineage>
</organism>
<proteinExistence type="inferred from homology"/>
<comment type="function">
    <text evidence="1">Produces ATP from ADP in the presence of a proton gradient across the membrane.</text>
</comment>
<comment type="subunit">
    <text evidence="1">F-type ATPases have 2 components, CF(1) - the catalytic core - and CF(0) - the membrane proton channel. CF(1) has five subunits: alpha(3), beta(3), gamma(1), delta(1), epsilon(1). CF(0) has three main subunits: a, b and c.</text>
</comment>
<comment type="subcellular location">
    <subcellularLocation>
        <location evidence="1">Cell inner membrane</location>
        <topology evidence="1">Peripheral membrane protein</topology>
    </subcellularLocation>
</comment>
<comment type="similarity">
    <text evidence="1">Belongs to the ATPase epsilon chain family.</text>
</comment>
<dbReference type="EMBL" id="AM260522">
    <property type="protein sequence ID" value="CAJ99399.1"/>
    <property type="molecule type" value="Genomic_DNA"/>
</dbReference>
<dbReference type="RefSeq" id="WP_011577513.1">
    <property type="nucleotide sequence ID" value="NC_008229.1"/>
</dbReference>
<dbReference type="SMR" id="Q17Y77"/>
<dbReference type="STRING" id="382638.Hac_0583"/>
<dbReference type="GeneID" id="31758060"/>
<dbReference type="KEGG" id="hac:Hac_0583"/>
<dbReference type="eggNOG" id="COG0355">
    <property type="taxonomic scope" value="Bacteria"/>
</dbReference>
<dbReference type="HOGENOM" id="CLU_084338_2_1_7"/>
<dbReference type="OrthoDB" id="9799969at2"/>
<dbReference type="BioCyc" id="HACI382638:HAC_RS02580-MONOMER"/>
<dbReference type="Proteomes" id="UP000000775">
    <property type="component" value="Chromosome"/>
</dbReference>
<dbReference type="GO" id="GO:0005886">
    <property type="term" value="C:plasma membrane"/>
    <property type="evidence" value="ECO:0007669"/>
    <property type="project" value="UniProtKB-SubCell"/>
</dbReference>
<dbReference type="GO" id="GO:0045259">
    <property type="term" value="C:proton-transporting ATP synthase complex"/>
    <property type="evidence" value="ECO:0007669"/>
    <property type="project" value="UniProtKB-KW"/>
</dbReference>
<dbReference type="GO" id="GO:0005524">
    <property type="term" value="F:ATP binding"/>
    <property type="evidence" value="ECO:0007669"/>
    <property type="project" value="UniProtKB-UniRule"/>
</dbReference>
<dbReference type="GO" id="GO:0046933">
    <property type="term" value="F:proton-transporting ATP synthase activity, rotational mechanism"/>
    <property type="evidence" value="ECO:0007669"/>
    <property type="project" value="UniProtKB-UniRule"/>
</dbReference>
<dbReference type="CDD" id="cd12152">
    <property type="entry name" value="F1-ATPase_delta"/>
    <property type="match status" value="1"/>
</dbReference>
<dbReference type="Gene3D" id="2.60.15.10">
    <property type="entry name" value="F0F1 ATP synthase delta/epsilon subunit, N-terminal"/>
    <property type="match status" value="1"/>
</dbReference>
<dbReference type="HAMAP" id="MF_00530">
    <property type="entry name" value="ATP_synth_epsil_bac"/>
    <property type="match status" value="1"/>
</dbReference>
<dbReference type="InterPro" id="IPR001469">
    <property type="entry name" value="ATP_synth_F1_dsu/esu"/>
</dbReference>
<dbReference type="InterPro" id="IPR020546">
    <property type="entry name" value="ATP_synth_F1_dsu/esu_N"/>
</dbReference>
<dbReference type="InterPro" id="IPR036771">
    <property type="entry name" value="ATPsynth_dsu/esu_N"/>
</dbReference>
<dbReference type="NCBIfam" id="TIGR01216">
    <property type="entry name" value="ATP_synt_epsi"/>
    <property type="match status" value="1"/>
</dbReference>
<dbReference type="PANTHER" id="PTHR13822">
    <property type="entry name" value="ATP SYNTHASE DELTA/EPSILON CHAIN"/>
    <property type="match status" value="1"/>
</dbReference>
<dbReference type="PANTHER" id="PTHR13822:SF10">
    <property type="entry name" value="ATP SYNTHASE EPSILON CHAIN, CHLOROPLASTIC"/>
    <property type="match status" value="1"/>
</dbReference>
<dbReference type="Pfam" id="PF02823">
    <property type="entry name" value="ATP-synt_DE_N"/>
    <property type="match status" value="1"/>
</dbReference>
<dbReference type="SUPFAM" id="SSF51344">
    <property type="entry name" value="Epsilon subunit of F1F0-ATP synthase N-terminal domain"/>
    <property type="match status" value="1"/>
</dbReference>
<protein>
    <recommendedName>
        <fullName evidence="1">ATP synthase epsilon chain</fullName>
    </recommendedName>
    <alternativeName>
        <fullName evidence="1">ATP synthase F1 sector epsilon subunit</fullName>
    </alternativeName>
    <alternativeName>
        <fullName evidence="1">F-ATPase epsilon subunit</fullName>
    </alternativeName>
</protein>
<accession>Q17Y77</accession>
<evidence type="ECO:0000255" key="1">
    <source>
        <dbReference type="HAMAP-Rule" id="MF_00530"/>
    </source>
</evidence>